<name>RL36_FRAAA</name>
<accession>Q0RRP7</accession>
<feature type="chain" id="PRO_0000302208" description="Large ribosomal subunit protein bL36">
    <location>
        <begin position="1"/>
        <end position="37"/>
    </location>
</feature>
<protein>
    <recommendedName>
        <fullName evidence="1">Large ribosomal subunit protein bL36</fullName>
    </recommendedName>
    <alternativeName>
        <fullName evidence="2">50S ribosomal protein L36</fullName>
    </alternativeName>
</protein>
<sequence>MKVKPSVKKICDKCKVIRRHGRVMVICDNLRHKQRQG</sequence>
<gene>
    <name evidence="1" type="primary">rpmJ</name>
    <name type="ordered locus">FRAAL1106</name>
</gene>
<evidence type="ECO:0000255" key="1">
    <source>
        <dbReference type="HAMAP-Rule" id="MF_00251"/>
    </source>
</evidence>
<evidence type="ECO:0000305" key="2"/>
<dbReference type="EMBL" id="CT573213">
    <property type="protein sequence ID" value="CAJ59770.1"/>
    <property type="molecule type" value="Genomic_DNA"/>
</dbReference>
<dbReference type="RefSeq" id="WP_003956441.1">
    <property type="nucleotide sequence ID" value="NC_008278.1"/>
</dbReference>
<dbReference type="SMR" id="Q0RRP7"/>
<dbReference type="STRING" id="326424.FRAAL1106"/>
<dbReference type="GeneID" id="97760394"/>
<dbReference type="KEGG" id="fal:FRAAL1106"/>
<dbReference type="eggNOG" id="COG0257">
    <property type="taxonomic scope" value="Bacteria"/>
</dbReference>
<dbReference type="HOGENOM" id="CLU_135723_6_2_11"/>
<dbReference type="OrthoDB" id="9802520at2"/>
<dbReference type="Proteomes" id="UP000000657">
    <property type="component" value="Chromosome"/>
</dbReference>
<dbReference type="GO" id="GO:0005737">
    <property type="term" value="C:cytoplasm"/>
    <property type="evidence" value="ECO:0007669"/>
    <property type="project" value="UniProtKB-ARBA"/>
</dbReference>
<dbReference type="GO" id="GO:1990904">
    <property type="term" value="C:ribonucleoprotein complex"/>
    <property type="evidence" value="ECO:0007669"/>
    <property type="project" value="UniProtKB-KW"/>
</dbReference>
<dbReference type="GO" id="GO:0005840">
    <property type="term" value="C:ribosome"/>
    <property type="evidence" value="ECO:0007669"/>
    <property type="project" value="UniProtKB-KW"/>
</dbReference>
<dbReference type="GO" id="GO:0003735">
    <property type="term" value="F:structural constituent of ribosome"/>
    <property type="evidence" value="ECO:0007669"/>
    <property type="project" value="InterPro"/>
</dbReference>
<dbReference type="GO" id="GO:0006412">
    <property type="term" value="P:translation"/>
    <property type="evidence" value="ECO:0007669"/>
    <property type="project" value="UniProtKB-UniRule"/>
</dbReference>
<dbReference type="HAMAP" id="MF_00251">
    <property type="entry name" value="Ribosomal_bL36"/>
    <property type="match status" value="1"/>
</dbReference>
<dbReference type="InterPro" id="IPR000473">
    <property type="entry name" value="Ribosomal_bL36"/>
</dbReference>
<dbReference type="InterPro" id="IPR035977">
    <property type="entry name" value="Ribosomal_bL36_sp"/>
</dbReference>
<dbReference type="NCBIfam" id="TIGR01022">
    <property type="entry name" value="rpmJ_bact"/>
    <property type="match status" value="1"/>
</dbReference>
<dbReference type="PANTHER" id="PTHR42888">
    <property type="entry name" value="50S RIBOSOMAL PROTEIN L36, CHLOROPLASTIC"/>
    <property type="match status" value="1"/>
</dbReference>
<dbReference type="PANTHER" id="PTHR42888:SF1">
    <property type="entry name" value="LARGE RIBOSOMAL SUBUNIT PROTEIN BL36C"/>
    <property type="match status" value="1"/>
</dbReference>
<dbReference type="Pfam" id="PF00444">
    <property type="entry name" value="Ribosomal_L36"/>
    <property type="match status" value="1"/>
</dbReference>
<dbReference type="SUPFAM" id="SSF57840">
    <property type="entry name" value="Ribosomal protein L36"/>
    <property type="match status" value="1"/>
</dbReference>
<dbReference type="PROSITE" id="PS00828">
    <property type="entry name" value="RIBOSOMAL_L36"/>
    <property type="match status" value="1"/>
</dbReference>
<organism>
    <name type="scientific">Frankia alni (strain DSM 45986 / CECT 9034 / ACN14a)</name>
    <dbReference type="NCBI Taxonomy" id="326424"/>
    <lineage>
        <taxon>Bacteria</taxon>
        <taxon>Bacillati</taxon>
        <taxon>Actinomycetota</taxon>
        <taxon>Actinomycetes</taxon>
        <taxon>Frankiales</taxon>
        <taxon>Frankiaceae</taxon>
        <taxon>Frankia</taxon>
    </lineage>
</organism>
<proteinExistence type="inferred from homology"/>
<comment type="similarity">
    <text evidence="1">Belongs to the bacterial ribosomal protein bL36 family.</text>
</comment>
<reference key="1">
    <citation type="journal article" date="2007" name="Genome Res.">
        <title>Genome characteristics of facultatively symbiotic Frankia sp. strains reflect host range and host plant biogeography.</title>
        <authorList>
            <person name="Normand P."/>
            <person name="Lapierre P."/>
            <person name="Tisa L.S."/>
            <person name="Gogarten J.P."/>
            <person name="Alloisio N."/>
            <person name="Bagnarol E."/>
            <person name="Bassi C.A."/>
            <person name="Berry A.M."/>
            <person name="Bickhart D.M."/>
            <person name="Choisne N."/>
            <person name="Couloux A."/>
            <person name="Cournoyer B."/>
            <person name="Cruveiller S."/>
            <person name="Daubin V."/>
            <person name="Demange N."/>
            <person name="Francino M.P."/>
            <person name="Goltsman E."/>
            <person name="Huang Y."/>
            <person name="Kopp O.R."/>
            <person name="Labarre L."/>
            <person name="Lapidus A."/>
            <person name="Lavire C."/>
            <person name="Marechal J."/>
            <person name="Martinez M."/>
            <person name="Mastronunzio J.E."/>
            <person name="Mullin B.C."/>
            <person name="Niemann J."/>
            <person name="Pujic P."/>
            <person name="Rawnsley T."/>
            <person name="Rouy Z."/>
            <person name="Schenowitz C."/>
            <person name="Sellstedt A."/>
            <person name="Tavares F."/>
            <person name="Tomkins J.P."/>
            <person name="Vallenet D."/>
            <person name="Valverde C."/>
            <person name="Wall L.G."/>
            <person name="Wang Y."/>
            <person name="Medigue C."/>
            <person name="Benson D.R."/>
        </authorList>
    </citation>
    <scope>NUCLEOTIDE SEQUENCE [LARGE SCALE GENOMIC DNA]</scope>
    <source>
        <strain>DSM 45986 / CECT 9034 / ACN14a</strain>
    </source>
</reference>
<keyword id="KW-1185">Reference proteome</keyword>
<keyword id="KW-0687">Ribonucleoprotein</keyword>
<keyword id="KW-0689">Ribosomal protein</keyword>